<proteinExistence type="evidence at transcript level"/>
<dbReference type="EC" id="1.7.1.7"/>
<dbReference type="EMBL" id="AF424648">
    <property type="protein sequence ID" value="AAN31473.1"/>
    <property type="molecule type" value="mRNA"/>
</dbReference>
<dbReference type="SMR" id="P59075"/>
<dbReference type="VEuPathDB" id="FungiDB:PITG_15661"/>
<dbReference type="GO" id="GO:1902560">
    <property type="term" value="C:GMP reductase complex"/>
    <property type="evidence" value="ECO:0007669"/>
    <property type="project" value="InterPro"/>
</dbReference>
<dbReference type="GO" id="GO:0003920">
    <property type="term" value="F:GMP reductase activity"/>
    <property type="evidence" value="ECO:0007669"/>
    <property type="project" value="UniProtKB-UniRule"/>
</dbReference>
<dbReference type="GO" id="GO:0046872">
    <property type="term" value="F:metal ion binding"/>
    <property type="evidence" value="ECO:0007669"/>
    <property type="project" value="UniProtKB-KW"/>
</dbReference>
<dbReference type="GO" id="GO:0006144">
    <property type="term" value="P:purine nucleobase metabolic process"/>
    <property type="evidence" value="ECO:0007669"/>
    <property type="project" value="UniProtKB-KW"/>
</dbReference>
<dbReference type="GO" id="GO:0006163">
    <property type="term" value="P:purine nucleotide metabolic process"/>
    <property type="evidence" value="ECO:0007669"/>
    <property type="project" value="UniProtKB-UniRule"/>
</dbReference>
<dbReference type="CDD" id="cd00381">
    <property type="entry name" value="IMPDH"/>
    <property type="match status" value="1"/>
</dbReference>
<dbReference type="FunFam" id="3.20.20.70:FF:000012">
    <property type="entry name" value="GMP reductase"/>
    <property type="match status" value="1"/>
</dbReference>
<dbReference type="Gene3D" id="3.20.20.70">
    <property type="entry name" value="Aldolase class I"/>
    <property type="match status" value="1"/>
</dbReference>
<dbReference type="HAMAP" id="MF_00596">
    <property type="entry name" value="GMP_reduct_type1"/>
    <property type="match status" value="1"/>
</dbReference>
<dbReference type="InterPro" id="IPR013785">
    <property type="entry name" value="Aldolase_TIM"/>
</dbReference>
<dbReference type="InterPro" id="IPR050139">
    <property type="entry name" value="GMP_reductase"/>
</dbReference>
<dbReference type="InterPro" id="IPR005993">
    <property type="entry name" value="GMPR"/>
</dbReference>
<dbReference type="InterPro" id="IPR015875">
    <property type="entry name" value="IMP_DH/GMP_Rdtase_CS"/>
</dbReference>
<dbReference type="InterPro" id="IPR001093">
    <property type="entry name" value="IMP_DH_GMPRt"/>
</dbReference>
<dbReference type="NCBIfam" id="TIGR01305">
    <property type="entry name" value="GMP_reduct_1"/>
    <property type="match status" value="1"/>
</dbReference>
<dbReference type="NCBIfam" id="NF003470">
    <property type="entry name" value="PRK05096.1"/>
    <property type="match status" value="1"/>
</dbReference>
<dbReference type="PANTHER" id="PTHR43170">
    <property type="entry name" value="GMP REDUCTASE"/>
    <property type="match status" value="1"/>
</dbReference>
<dbReference type="PANTHER" id="PTHR43170:SF5">
    <property type="entry name" value="GMP REDUCTASE"/>
    <property type="match status" value="1"/>
</dbReference>
<dbReference type="Pfam" id="PF00478">
    <property type="entry name" value="IMPDH"/>
    <property type="match status" value="1"/>
</dbReference>
<dbReference type="PIRSF" id="PIRSF000235">
    <property type="entry name" value="GMP_reductase"/>
    <property type="match status" value="1"/>
</dbReference>
<dbReference type="SMART" id="SM01240">
    <property type="entry name" value="IMPDH"/>
    <property type="match status" value="1"/>
</dbReference>
<dbReference type="SUPFAM" id="SSF51412">
    <property type="entry name" value="Inosine monophosphate dehydrogenase (IMPDH)"/>
    <property type="match status" value="1"/>
</dbReference>
<dbReference type="PROSITE" id="PS00487">
    <property type="entry name" value="IMP_DH_GMP_RED"/>
    <property type="match status" value="1"/>
</dbReference>
<organism>
    <name type="scientific">Phytophthora infestans</name>
    <name type="common">Potato late blight agent</name>
    <name type="synonym">Botrytis infestans</name>
    <dbReference type="NCBI Taxonomy" id="4787"/>
    <lineage>
        <taxon>Eukaryota</taxon>
        <taxon>Sar</taxon>
        <taxon>Stramenopiles</taxon>
        <taxon>Oomycota</taxon>
        <taxon>Peronosporales</taxon>
        <taxon>Peronosporaceae</taxon>
        <taxon>Phytophthora</taxon>
    </lineage>
</organism>
<protein>
    <recommendedName>
        <fullName>GMP reductase</fullName>
        <ecNumber>1.7.1.7</ecNumber>
    </recommendedName>
    <alternativeName>
        <fullName>Guanosine 5'-monophosphate oxidoreductase</fullName>
        <shortName>Guanosine monophosphate reductase</shortName>
    </alternativeName>
</protein>
<feature type="chain" id="PRO_0000093731" description="GMP reductase">
    <location>
        <begin position="1"/>
        <end position="362"/>
    </location>
</feature>
<feature type="active site" description="Thioimidate intermediate" evidence="1">
    <location>
        <position position="186"/>
    </location>
</feature>
<feature type="active site" description="Proton donor/acceptor" evidence="1">
    <location>
        <position position="188"/>
    </location>
</feature>
<feature type="binding site" evidence="1">
    <location>
        <begin position="26"/>
        <end position="27"/>
    </location>
    <ligand>
        <name>NADP(+)</name>
        <dbReference type="ChEBI" id="CHEBI:58349"/>
        <note>ligand shared between two neighboring subunits</note>
    </ligand>
</feature>
<feature type="binding site" description="in other chain" evidence="1">
    <location>
        <position position="78"/>
    </location>
    <ligand>
        <name>NADP(+)</name>
        <dbReference type="ChEBI" id="CHEBI:58349"/>
        <note>ligand shared between two neighboring subunits</note>
    </ligand>
</feature>
<feature type="binding site" description="in other chain" evidence="1">
    <location>
        <begin position="129"/>
        <end position="131"/>
    </location>
    <ligand>
        <name>NADP(+)</name>
        <dbReference type="ChEBI" id="CHEBI:58349"/>
        <note>ligand shared between two neighboring subunits</note>
    </ligand>
</feature>
<feature type="binding site" description="in other chain" evidence="1">
    <location>
        <begin position="180"/>
        <end position="181"/>
    </location>
    <ligand>
        <name>NADP(+)</name>
        <dbReference type="ChEBI" id="CHEBI:58349"/>
        <note>ligand shared between two neighboring subunits</note>
    </ligand>
</feature>
<feature type="binding site" evidence="1">
    <location>
        <position position="181"/>
    </location>
    <ligand>
        <name>K(+)</name>
        <dbReference type="ChEBI" id="CHEBI:29103"/>
    </ligand>
</feature>
<feature type="binding site" evidence="1">
    <location>
        <position position="183"/>
    </location>
    <ligand>
        <name>K(+)</name>
        <dbReference type="ChEBI" id="CHEBI:29103"/>
    </ligand>
</feature>
<feature type="binding site" evidence="1">
    <location>
        <position position="186"/>
    </location>
    <ligand>
        <name>K(+)</name>
        <dbReference type="ChEBI" id="CHEBI:29103"/>
    </ligand>
</feature>
<feature type="binding site" evidence="1">
    <location>
        <position position="189"/>
    </location>
    <ligand>
        <name>K(+)</name>
        <dbReference type="ChEBI" id="CHEBI:29103"/>
    </ligand>
</feature>
<feature type="binding site" evidence="1">
    <location>
        <begin position="219"/>
        <end position="221"/>
    </location>
    <ligand>
        <name>GMP</name>
        <dbReference type="ChEBI" id="CHEBI:58115"/>
    </ligand>
</feature>
<feature type="binding site" evidence="1">
    <location>
        <begin position="242"/>
        <end position="243"/>
    </location>
    <ligand>
        <name>GMP</name>
        <dbReference type="ChEBI" id="CHEBI:58115"/>
    </ligand>
</feature>
<feature type="binding site" evidence="1">
    <location>
        <begin position="268"/>
        <end position="270"/>
    </location>
    <ligand>
        <name>GMP</name>
        <dbReference type="ChEBI" id="CHEBI:58115"/>
    </ligand>
</feature>
<feature type="binding site" description="in other chain" evidence="1">
    <location>
        <position position="269"/>
    </location>
    <ligand>
        <name>NADP(+)</name>
        <dbReference type="ChEBI" id="CHEBI:58349"/>
        <note>ligand shared between two neighboring subunits</note>
    </ligand>
</feature>
<feature type="binding site" description="in other chain" evidence="1">
    <location>
        <begin position="285"/>
        <end position="286"/>
    </location>
    <ligand>
        <name>NADP(+)</name>
        <dbReference type="ChEBI" id="CHEBI:58349"/>
        <note>ligand shared between two neighboring subunits</note>
    </ligand>
</feature>
<feature type="binding site" evidence="1">
    <location>
        <begin position="286"/>
        <end position="290"/>
    </location>
    <ligand>
        <name>GMP</name>
        <dbReference type="ChEBI" id="CHEBI:58115"/>
    </ligand>
</feature>
<feature type="binding site" evidence="1">
    <location>
        <begin position="314"/>
        <end position="317"/>
    </location>
    <ligand>
        <name>NADP(+)</name>
        <dbReference type="ChEBI" id="CHEBI:58349"/>
        <note>ligand shared between two neighboring subunits</note>
    </ligand>
</feature>
<comment type="function">
    <text evidence="1">Catalyzes the irreversible NADPH-dependent deamination of GMP to IMP. It functions in the conversion of nucleobase, nucleoside and nucleotide derivatives of G to A nucleotides, and in maintaining the intracellular balance of A and G nucleotides (By similarity).</text>
</comment>
<comment type="catalytic activity">
    <reaction>
        <text>IMP + NH4(+) + NADP(+) = GMP + NADPH + 2 H(+)</text>
        <dbReference type="Rhea" id="RHEA:17185"/>
        <dbReference type="ChEBI" id="CHEBI:15378"/>
        <dbReference type="ChEBI" id="CHEBI:28938"/>
        <dbReference type="ChEBI" id="CHEBI:57783"/>
        <dbReference type="ChEBI" id="CHEBI:58053"/>
        <dbReference type="ChEBI" id="CHEBI:58115"/>
        <dbReference type="ChEBI" id="CHEBI:58349"/>
        <dbReference type="EC" id="1.7.1.7"/>
    </reaction>
</comment>
<comment type="similarity">
    <text evidence="2">Belongs to the IMPDH/GMPR family.</text>
</comment>
<sequence>MPRIETEVRLDFKDVLIRPKRSTLKSRSQVDVQREFRFLNSKRTWSGVPVIAANMDTVGTFEMAVELAKLEFITCVHKHYTPQDWATFAAKHPDVLPTVAVSGGSSAADVEKITAILKSHPDIRFICLDVANGYSEVFVQAVRNVRSAFPEHTIIAGNVVTGEMVEELLLSGADIIKVGIGPGSVCTTRKQTGVGYPQLSAVLECADAAHGLNGHVISDGGCTCPGDVAKAFGAGADFVMLGGMLAGHDESGGDKIEINGKLLKKFYGMSSSEAMKKHNGGVAEYRASEGKSVTVPYRGPVSGTCKEILGGVRSTCTYVGASKLKEISKRTTFIRVSQQLNEVFGRAPNEQEEQVSKKQKTG</sequence>
<keyword id="KW-0479">Metal-binding</keyword>
<keyword id="KW-0521">NADP</keyword>
<keyword id="KW-0560">Oxidoreductase</keyword>
<keyword id="KW-0630">Potassium</keyword>
<keyword id="KW-0659">Purine metabolism</keyword>
<name>GMPR_PHYIN</name>
<reference key="1">
    <citation type="submission" date="2001-09" db="EMBL/GenBank/DDBJ databases">
        <title>EST mining and functional expression assays identify extracellular elicitor proteins from Phytophthora.</title>
        <authorList>
            <person name="Torto T.A."/>
            <person name="Styer A."/>
            <person name="Kamoun S."/>
        </authorList>
    </citation>
    <scope>NUCLEOTIDE SEQUENCE [MRNA]</scope>
    <source>
        <strain>DDR7602</strain>
    </source>
</reference>
<evidence type="ECO:0000250" key="1"/>
<evidence type="ECO:0000305" key="2"/>
<accession>P59075</accession>